<protein>
    <recommendedName>
        <fullName>Tail fiber protein p36</fullName>
    </recommendedName>
    <alternativeName>
        <fullName>Protein Gp36</fullName>
    </alternativeName>
</protein>
<comment type="function">
    <text>Structural component of the distal-half tail fiber.</text>
</comment>
<comment type="subunit">
    <text>The distal half-fiber contains two molecules each of Gp36 and Gp37 and one molecule of Gp35.</text>
</comment>
<comment type="subcellular location">
    <subcellularLocation>
        <location evidence="1">Virion</location>
    </subcellularLocation>
</comment>
<gene>
    <name type="primary">36</name>
</gene>
<name>VG36_BPK3</name>
<keyword id="KW-0945">Host-virus interaction</keyword>
<keyword id="KW-1161">Viral attachment to host cell</keyword>
<keyword id="KW-1230">Viral tail fiber protein</keyword>
<keyword id="KW-1227">Viral tail protein</keyword>
<keyword id="KW-0946">Virion</keyword>
<keyword id="KW-1160">Virus entry into host cell</keyword>
<dbReference type="EMBL" id="X01754">
    <property type="protein sequence ID" value="CAA25894.1"/>
    <property type="molecule type" value="Genomic_DNA"/>
</dbReference>
<dbReference type="PIR" id="B23056">
    <property type="entry name" value="TLBPK3"/>
</dbReference>
<dbReference type="GO" id="GO:0098024">
    <property type="term" value="C:virus tail, fiber"/>
    <property type="evidence" value="ECO:0007669"/>
    <property type="project" value="UniProtKB-KW"/>
</dbReference>
<dbReference type="GO" id="GO:0046718">
    <property type="term" value="P:symbiont entry into host cell"/>
    <property type="evidence" value="ECO:0007669"/>
    <property type="project" value="UniProtKB-KW"/>
</dbReference>
<dbReference type="GO" id="GO:0019062">
    <property type="term" value="P:virion attachment to host cell"/>
    <property type="evidence" value="ECO:0007669"/>
    <property type="project" value="UniProtKB-KW"/>
</dbReference>
<dbReference type="InterPro" id="IPR005601">
    <property type="entry name" value="Tail_fibre_p36"/>
</dbReference>
<dbReference type="Pfam" id="PF03903">
    <property type="entry name" value="Phage_T4_gp36"/>
    <property type="match status" value="1"/>
</dbReference>
<organism>
    <name type="scientific">Enterobacteria phage K3</name>
    <name type="common">Bacteriophage K3</name>
    <dbReference type="NCBI Taxonomy" id="10674"/>
    <lineage>
        <taxon>Viruses</taxon>
        <taxon>Duplodnaviria</taxon>
        <taxon>Heunggongvirae</taxon>
        <taxon>Uroviricota</taxon>
        <taxon>Caudoviricetes</taxon>
        <taxon>Straboviridae</taxon>
        <taxon>Tevenvirinae</taxon>
        <taxon>Tequatrovirus</taxon>
    </lineage>
</organism>
<feature type="chain" id="PRO_0000165023" description="Tail fiber protein p36">
    <location>
        <begin position="1"/>
        <end position="230"/>
    </location>
</feature>
<evidence type="ECO:0000305" key="1"/>
<reference key="1">
    <citation type="journal article" date="1985" name="Nucleic Acids Res.">
        <title>The nucleotide sequences of the tail fiber gene 36 of bacteriophage T2 and of genes 36 of the T-even type Escherichia coli phages K3 and Ox2.</title>
        <authorList>
            <person name="Riede I."/>
            <person name="Drexler K."/>
            <person name="Eschbach M.-L."/>
        </authorList>
    </citation>
    <scope>NUCLEOTIDE SEQUENCE [GENOMIC DNA]</scope>
</reference>
<organismHost>
    <name type="scientific">Escherichia coli</name>
    <dbReference type="NCBI Taxonomy" id="562"/>
</organismHost>
<accession>P07626</accession>
<sequence length="230" mass="24747">MADLKVGSTTGGSVIWHQGNFPLNPAGDDVLYKSFKIYSEYNKPQATDNDFVSKANGGTKSQGFQKEVEFREGVKISATFSGGSDLNGLYSGNGDGASREKANMDLRSWYGIGIWNTCTGDGSGTHNSGLMPGVVHVETCWRLLFQTDNVISNASGPTGPAHLTRKDYVDGAINTVTANANSRVLRSGDTMTGNLTAPNFFSQNPASQPSHVPRFDQIVIKDSVQDFGYY</sequence>
<proteinExistence type="predicted"/>